<feature type="chain" id="PRO_1000011181" description="Phosphopantetheine adenylyltransferase">
    <location>
        <begin position="1"/>
        <end position="158"/>
    </location>
</feature>
<feature type="binding site" evidence="1">
    <location>
        <begin position="9"/>
        <end position="10"/>
    </location>
    <ligand>
        <name>ATP</name>
        <dbReference type="ChEBI" id="CHEBI:30616"/>
    </ligand>
</feature>
<feature type="binding site" evidence="1">
    <location>
        <position position="9"/>
    </location>
    <ligand>
        <name>substrate</name>
    </ligand>
</feature>
<feature type="binding site" evidence="1">
    <location>
        <position position="17"/>
    </location>
    <ligand>
        <name>ATP</name>
        <dbReference type="ChEBI" id="CHEBI:30616"/>
    </ligand>
</feature>
<feature type="binding site" evidence="1">
    <location>
        <position position="41"/>
    </location>
    <ligand>
        <name>substrate</name>
    </ligand>
</feature>
<feature type="binding site" evidence="1">
    <location>
        <position position="73"/>
    </location>
    <ligand>
        <name>substrate</name>
    </ligand>
</feature>
<feature type="binding site" evidence="1">
    <location>
        <position position="87"/>
    </location>
    <ligand>
        <name>substrate</name>
    </ligand>
</feature>
<feature type="binding site" evidence="1">
    <location>
        <begin position="88"/>
        <end position="90"/>
    </location>
    <ligand>
        <name>ATP</name>
        <dbReference type="ChEBI" id="CHEBI:30616"/>
    </ligand>
</feature>
<feature type="binding site" evidence="1">
    <location>
        <position position="98"/>
    </location>
    <ligand>
        <name>ATP</name>
        <dbReference type="ChEBI" id="CHEBI:30616"/>
    </ligand>
</feature>
<feature type="binding site" evidence="1">
    <location>
        <begin position="122"/>
        <end position="128"/>
    </location>
    <ligand>
        <name>ATP</name>
        <dbReference type="ChEBI" id="CHEBI:30616"/>
    </ligand>
</feature>
<feature type="site" description="Transition state stabilizer" evidence="1">
    <location>
        <position position="17"/>
    </location>
</feature>
<protein>
    <recommendedName>
        <fullName evidence="1">Phosphopantetheine adenylyltransferase</fullName>
        <ecNumber evidence="1">2.7.7.3</ecNumber>
    </recommendedName>
    <alternativeName>
        <fullName evidence="1">Dephospho-CoA pyrophosphorylase</fullName>
    </alternativeName>
    <alternativeName>
        <fullName evidence="1">Pantetheine-phosphate adenylyltransferase</fullName>
        <shortName evidence="1">PPAT</shortName>
    </alternativeName>
</protein>
<proteinExistence type="inferred from homology"/>
<sequence>MSGAVCPGSFDPVTLGHVDIFERAAAQFDEVVVAVLVNPNKKGMFTLDERMEMIAESCAHLPNLRVESGQGLVVDFVRARGYSAIVKGLRSSTDFEYELQMAQMNKHVAGVDTFFIASAPSYSFVSSSLAKEVATLGGDVSALLPDAVNVRLQAKLRG</sequence>
<dbReference type="EC" id="2.7.7.3" evidence="1"/>
<dbReference type="EMBL" id="CP000518">
    <property type="protein sequence ID" value="ABL91190.1"/>
    <property type="molecule type" value="Genomic_DNA"/>
</dbReference>
<dbReference type="SMR" id="A1UED2"/>
<dbReference type="STRING" id="189918.Mkms_1991"/>
<dbReference type="KEGG" id="mkm:Mkms_1991"/>
<dbReference type="HOGENOM" id="CLU_100149_1_0_11"/>
<dbReference type="OrthoDB" id="9806661at2"/>
<dbReference type="UniPathway" id="UPA00241">
    <property type="reaction ID" value="UER00355"/>
</dbReference>
<dbReference type="GO" id="GO:0005737">
    <property type="term" value="C:cytoplasm"/>
    <property type="evidence" value="ECO:0007669"/>
    <property type="project" value="UniProtKB-SubCell"/>
</dbReference>
<dbReference type="GO" id="GO:0005524">
    <property type="term" value="F:ATP binding"/>
    <property type="evidence" value="ECO:0007669"/>
    <property type="project" value="UniProtKB-KW"/>
</dbReference>
<dbReference type="GO" id="GO:0004595">
    <property type="term" value="F:pantetheine-phosphate adenylyltransferase activity"/>
    <property type="evidence" value="ECO:0007669"/>
    <property type="project" value="UniProtKB-UniRule"/>
</dbReference>
<dbReference type="GO" id="GO:0015937">
    <property type="term" value="P:coenzyme A biosynthetic process"/>
    <property type="evidence" value="ECO:0007669"/>
    <property type="project" value="UniProtKB-UniRule"/>
</dbReference>
<dbReference type="CDD" id="cd02163">
    <property type="entry name" value="PPAT"/>
    <property type="match status" value="1"/>
</dbReference>
<dbReference type="FunFam" id="3.40.50.620:FF:000012">
    <property type="entry name" value="Phosphopantetheine adenylyltransferase"/>
    <property type="match status" value="1"/>
</dbReference>
<dbReference type="Gene3D" id="3.40.50.620">
    <property type="entry name" value="HUPs"/>
    <property type="match status" value="1"/>
</dbReference>
<dbReference type="HAMAP" id="MF_00151">
    <property type="entry name" value="PPAT_bact"/>
    <property type="match status" value="1"/>
</dbReference>
<dbReference type="InterPro" id="IPR004821">
    <property type="entry name" value="Cyt_trans-like"/>
</dbReference>
<dbReference type="InterPro" id="IPR001980">
    <property type="entry name" value="PPAT"/>
</dbReference>
<dbReference type="InterPro" id="IPR014729">
    <property type="entry name" value="Rossmann-like_a/b/a_fold"/>
</dbReference>
<dbReference type="NCBIfam" id="TIGR01510">
    <property type="entry name" value="coaD_prev_kdtB"/>
    <property type="match status" value="1"/>
</dbReference>
<dbReference type="NCBIfam" id="TIGR00125">
    <property type="entry name" value="cyt_tran_rel"/>
    <property type="match status" value="1"/>
</dbReference>
<dbReference type="PANTHER" id="PTHR21342">
    <property type="entry name" value="PHOSPHOPANTETHEINE ADENYLYLTRANSFERASE"/>
    <property type="match status" value="1"/>
</dbReference>
<dbReference type="PANTHER" id="PTHR21342:SF1">
    <property type="entry name" value="PHOSPHOPANTETHEINE ADENYLYLTRANSFERASE"/>
    <property type="match status" value="1"/>
</dbReference>
<dbReference type="Pfam" id="PF01467">
    <property type="entry name" value="CTP_transf_like"/>
    <property type="match status" value="1"/>
</dbReference>
<dbReference type="PRINTS" id="PR01020">
    <property type="entry name" value="LPSBIOSNTHSS"/>
</dbReference>
<dbReference type="SUPFAM" id="SSF52374">
    <property type="entry name" value="Nucleotidylyl transferase"/>
    <property type="match status" value="1"/>
</dbReference>
<keyword id="KW-0067">ATP-binding</keyword>
<keyword id="KW-0173">Coenzyme A biosynthesis</keyword>
<keyword id="KW-0963">Cytoplasm</keyword>
<keyword id="KW-0460">Magnesium</keyword>
<keyword id="KW-0547">Nucleotide-binding</keyword>
<keyword id="KW-0548">Nucleotidyltransferase</keyword>
<keyword id="KW-0808">Transferase</keyword>
<organism>
    <name type="scientific">Mycobacterium sp. (strain KMS)</name>
    <dbReference type="NCBI Taxonomy" id="189918"/>
    <lineage>
        <taxon>Bacteria</taxon>
        <taxon>Bacillati</taxon>
        <taxon>Actinomycetota</taxon>
        <taxon>Actinomycetes</taxon>
        <taxon>Mycobacteriales</taxon>
        <taxon>Mycobacteriaceae</taxon>
        <taxon>Mycobacterium</taxon>
    </lineage>
</organism>
<evidence type="ECO:0000255" key="1">
    <source>
        <dbReference type="HAMAP-Rule" id="MF_00151"/>
    </source>
</evidence>
<gene>
    <name evidence="1" type="primary">coaD</name>
    <name type="ordered locus">Mkms_1991</name>
</gene>
<name>COAD_MYCSK</name>
<comment type="function">
    <text evidence="1">Reversibly transfers an adenylyl group from ATP to 4'-phosphopantetheine, yielding dephospho-CoA (dPCoA) and pyrophosphate.</text>
</comment>
<comment type="catalytic activity">
    <reaction evidence="1">
        <text>(R)-4'-phosphopantetheine + ATP + H(+) = 3'-dephospho-CoA + diphosphate</text>
        <dbReference type="Rhea" id="RHEA:19801"/>
        <dbReference type="ChEBI" id="CHEBI:15378"/>
        <dbReference type="ChEBI" id="CHEBI:30616"/>
        <dbReference type="ChEBI" id="CHEBI:33019"/>
        <dbReference type="ChEBI" id="CHEBI:57328"/>
        <dbReference type="ChEBI" id="CHEBI:61723"/>
        <dbReference type="EC" id="2.7.7.3"/>
    </reaction>
</comment>
<comment type="cofactor">
    <cofactor evidence="1">
        <name>Mg(2+)</name>
        <dbReference type="ChEBI" id="CHEBI:18420"/>
    </cofactor>
</comment>
<comment type="pathway">
    <text evidence="1">Cofactor biosynthesis; coenzyme A biosynthesis; CoA from (R)-pantothenate: step 4/5.</text>
</comment>
<comment type="subunit">
    <text evidence="1">Homohexamer.</text>
</comment>
<comment type="subcellular location">
    <subcellularLocation>
        <location evidence="1">Cytoplasm</location>
    </subcellularLocation>
</comment>
<comment type="similarity">
    <text evidence="1">Belongs to the bacterial CoaD family.</text>
</comment>
<reference key="1">
    <citation type="submission" date="2006-12" db="EMBL/GenBank/DDBJ databases">
        <title>Complete sequence of chromosome of Mycobacterium sp. KMS.</title>
        <authorList>
            <consortium name="US DOE Joint Genome Institute"/>
            <person name="Copeland A."/>
            <person name="Lucas S."/>
            <person name="Lapidus A."/>
            <person name="Barry K."/>
            <person name="Detter J.C."/>
            <person name="Glavina del Rio T."/>
            <person name="Hammon N."/>
            <person name="Israni S."/>
            <person name="Dalin E."/>
            <person name="Tice H."/>
            <person name="Pitluck S."/>
            <person name="Kiss H."/>
            <person name="Brettin T."/>
            <person name="Bruce D."/>
            <person name="Han C."/>
            <person name="Tapia R."/>
            <person name="Gilna P."/>
            <person name="Schmutz J."/>
            <person name="Larimer F."/>
            <person name="Land M."/>
            <person name="Hauser L."/>
            <person name="Kyrpides N."/>
            <person name="Mikhailova N."/>
            <person name="Miller C.D."/>
            <person name="Richardson P."/>
        </authorList>
    </citation>
    <scope>NUCLEOTIDE SEQUENCE [LARGE SCALE GENOMIC DNA]</scope>
    <source>
        <strain>KMS</strain>
    </source>
</reference>
<accession>A1UED2</accession>